<protein>
    <recommendedName>
        <fullName evidence="1">tRNA pseudouridine synthase A</fullName>
        <ecNumber evidence="1">5.4.99.12</ecNumber>
    </recommendedName>
    <alternativeName>
        <fullName evidence="1">tRNA pseudouridine(38-40) synthase</fullName>
    </alternativeName>
    <alternativeName>
        <fullName evidence="1">tRNA pseudouridylate synthase I</fullName>
    </alternativeName>
    <alternativeName>
        <fullName evidence="1">tRNA-uridine isomerase I</fullName>
    </alternativeName>
</protein>
<feature type="chain" id="PRO_1000017044" description="tRNA pseudouridine synthase A">
    <location>
        <begin position="1"/>
        <end position="246"/>
    </location>
</feature>
<feature type="active site" description="Nucleophile" evidence="1">
    <location>
        <position position="52"/>
    </location>
</feature>
<feature type="binding site" evidence="1">
    <location>
        <position position="111"/>
    </location>
    <ligand>
        <name>substrate</name>
    </ligand>
</feature>
<comment type="function">
    <text evidence="1">Formation of pseudouridine at positions 38, 39 and 40 in the anticodon stem and loop of transfer RNAs.</text>
</comment>
<comment type="catalytic activity">
    <reaction evidence="1">
        <text>uridine(38/39/40) in tRNA = pseudouridine(38/39/40) in tRNA</text>
        <dbReference type="Rhea" id="RHEA:22376"/>
        <dbReference type="Rhea" id="RHEA-COMP:10085"/>
        <dbReference type="Rhea" id="RHEA-COMP:10087"/>
        <dbReference type="ChEBI" id="CHEBI:65314"/>
        <dbReference type="ChEBI" id="CHEBI:65315"/>
        <dbReference type="EC" id="5.4.99.12"/>
    </reaction>
</comment>
<comment type="subunit">
    <text evidence="1">Homodimer.</text>
</comment>
<comment type="similarity">
    <text evidence="1">Belongs to the tRNA pseudouridine synthase TruA family.</text>
</comment>
<proteinExistence type="inferred from homology"/>
<keyword id="KW-0413">Isomerase</keyword>
<keyword id="KW-0819">tRNA processing</keyword>
<name>TRUA_BORAP</name>
<reference key="1">
    <citation type="journal article" date="2006" name="BMC Genomics">
        <title>Comparative genome analysis: selection pressure on the Borrelia vls cassettes is essential for infectivity.</title>
        <authorList>
            <person name="Gloeckner G."/>
            <person name="Schulte-Spechtel U."/>
            <person name="Schilhabel M."/>
            <person name="Felder M."/>
            <person name="Suehnel J."/>
            <person name="Wilske B."/>
            <person name="Platzer M."/>
        </authorList>
    </citation>
    <scope>NUCLEOTIDE SEQUENCE [LARGE SCALE GENOMIC DNA]</scope>
    <source>
        <strain>PKo</strain>
    </source>
</reference>
<reference key="2">
    <citation type="journal article" date="2011" name="J. Bacteriol.">
        <title>Whole-genome sequences of two Borrelia afzelii and two Borrelia garinii Lyme disease agent isolates.</title>
        <authorList>
            <person name="Casjens S.R."/>
            <person name="Mongodin E.F."/>
            <person name="Qiu W.G."/>
            <person name="Dunn J.J."/>
            <person name="Luft B.J."/>
            <person name="Fraser-Liggett C.M."/>
            <person name="Schutzer S.E."/>
        </authorList>
    </citation>
    <scope>NUCLEOTIDE SEQUENCE [LARGE SCALE GENOMIC DNA]</scope>
    <source>
        <strain>PKo</strain>
    </source>
</reference>
<sequence>MKKILAEIAYDGSMYHGFQIQPTKPTIQGEIEKALMKINKKKIKIHSSGRTDKGVHAKRQIITFDININIQLNNLKKALNAILLKPGIKILKLKHVKNSFHPRFNAQKRKYSYCILNSDNYYPWESYQAYYVNKKLNINNLNQMAKILIGNHDFTTFSCIKDKSKSKFRHIHSAKFKKKGKYIIFEIIGSSFLWKMVRSIIGTMLDIEIKNESISTFETILKSKNRNLARTTAPANALFLDKVYYE</sequence>
<dbReference type="EC" id="5.4.99.12" evidence="1"/>
<dbReference type="EMBL" id="CP000395">
    <property type="protein sequence ID" value="ABH01276.1"/>
    <property type="molecule type" value="Genomic_DNA"/>
</dbReference>
<dbReference type="EMBL" id="CP002933">
    <property type="protein sequence ID" value="AEL69246.1"/>
    <property type="molecule type" value="Genomic_DNA"/>
</dbReference>
<dbReference type="RefSeq" id="WP_004790594.1">
    <property type="nucleotide sequence ID" value="NZ_CP160066.1"/>
</dbReference>
<dbReference type="SMR" id="Q0SPF2"/>
<dbReference type="STRING" id="29518.BLA32_04220"/>
<dbReference type="GeneID" id="76831554"/>
<dbReference type="KEGG" id="baf:BAPKO_0011"/>
<dbReference type="KEGG" id="bafz:BafPKo_0012"/>
<dbReference type="PATRIC" id="fig|390236.22.peg.12"/>
<dbReference type="eggNOG" id="COG0101">
    <property type="taxonomic scope" value="Bacteria"/>
</dbReference>
<dbReference type="HOGENOM" id="CLU_014673_0_1_12"/>
<dbReference type="OrthoDB" id="9811823at2"/>
<dbReference type="Proteomes" id="UP000005216">
    <property type="component" value="Chromosome"/>
</dbReference>
<dbReference type="GO" id="GO:0003723">
    <property type="term" value="F:RNA binding"/>
    <property type="evidence" value="ECO:0007669"/>
    <property type="project" value="InterPro"/>
</dbReference>
<dbReference type="GO" id="GO:0160147">
    <property type="term" value="F:tRNA pseudouridine(38-40) synthase activity"/>
    <property type="evidence" value="ECO:0007669"/>
    <property type="project" value="UniProtKB-EC"/>
</dbReference>
<dbReference type="GO" id="GO:0031119">
    <property type="term" value="P:tRNA pseudouridine synthesis"/>
    <property type="evidence" value="ECO:0007669"/>
    <property type="project" value="UniProtKB-UniRule"/>
</dbReference>
<dbReference type="CDD" id="cd02570">
    <property type="entry name" value="PseudoU_synth_EcTruA"/>
    <property type="match status" value="1"/>
</dbReference>
<dbReference type="FunFam" id="3.30.70.580:FF:000001">
    <property type="entry name" value="tRNA pseudouridine synthase A"/>
    <property type="match status" value="1"/>
</dbReference>
<dbReference type="Gene3D" id="3.30.70.660">
    <property type="entry name" value="Pseudouridine synthase I, catalytic domain, C-terminal subdomain"/>
    <property type="match status" value="1"/>
</dbReference>
<dbReference type="Gene3D" id="3.30.70.580">
    <property type="entry name" value="Pseudouridine synthase I, catalytic domain, N-terminal subdomain"/>
    <property type="match status" value="1"/>
</dbReference>
<dbReference type="HAMAP" id="MF_00171">
    <property type="entry name" value="TruA"/>
    <property type="match status" value="1"/>
</dbReference>
<dbReference type="InterPro" id="IPR020103">
    <property type="entry name" value="PsdUridine_synth_cat_dom_sf"/>
</dbReference>
<dbReference type="InterPro" id="IPR001406">
    <property type="entry name" value="PsdUridine_synth_TruA"/>
</dbReference>
<dbReference type="InterPro" id="IPR020097">
    <property type="entry name" value="PsdUridine_synth_TruA_a/b_dom"/>
</dbReference>
<dbReference type="InterPro" id="IPR020095">
    <property type="entry name" value="PsdUridine_synth_TruA_C"/>
</dbReference>
<dbReference type="InterPro" id="IPR020094">
    <property type="entry name" value="TruA/RsuA/RluB/E/F_N"/>
</dbReference>
<dbReference type="NCBIfam" id="TIGR00071">
    <property type="entry name" value="hisT_truA"/>
    <property type="match status" value="1"/>
</dbReference>
<dbReference type="PANTHER" id="PTHR11142">
    <property type="entry name" value="PSEUDOURIDYLATE SYNTHASE"/>
    <property type="match status" value="1"/>
</dbReference>
<dbReference type="PANTHER" id="PTHR11142:SF0">
    <property type="entry name" value="TRNA PSEUDOURIDINE SYNTHASE-LIKE 1"/>
    <property type="match status" value="1"/>
</dbReference>
<dbReference type="Pfam" id="PF01416">
    <property type="entry name" value="PseudoU_synth_1"/>
    <property type="match status" value="2"/>
</dbReference>
<dbReference type="PIRSF" id="PIRSF001430">
    <property type="entry name" value="tRNA_psdUrid_synth"/>
    <property type="match status" value="1"/>
</dbReference>
<dbReference type="SUPFAM" id="SSF55120">
    <property type="entry name" value="Pseudouridine synthase"/>
    <property type="match status" value="1"/>
</dbReference>
<evidence type="ECO:0000255" key="1">
    <source>
        <dbReference type="HAMAP-Rule" id="MF_00171"/>
    </source>
</evidence>
<organism>
    <name type="scientific">Borreliella afzelii (strain PKo)</name>
    <name type="common">Borrelia afzelii</name>
    <dbReference type="NCBI Taxonomy" id="390236"/>
    <lineage>
        <taxon>Bacteria</taxon>
        <taxon>Pseudomonadati</taxon>
        <taxon>Spirochaetota</taxon>
        <taxon>Spirochaetia</taxon>
        <taxon>Spirochaetales</taxon>
        <taxon>Borreliaceae</taxon>
        <taxon>Borreliella</taxon>
    </lineage>
</organism>
<accession>Q0SPF2</accession>
<accession>G0IQ42</accession>
<gene>
    <name evidence="1" type="primary">truA</name>
    <name type="ordered locus">BAPKO_0011</name>
    <name type="ordered locus">BafPKo_0012</name>
</gene>